<feature type="chain" id="PRO_1000199769" description="Uracil-DNA glycosylase">
    <location>
        <begin position="1"/>
        <end position="225"/>
    </location>
</feature>
<feature type="active site" description="Proton acceptor" evidence="1">
    <location>
        <position position="65"/>
    </location>
</feature>
<proteinExistence type="inferred from homology"/>
<comment type="function">
    <text evidence="1">Excises uracil residues from the DNA which can arise as a result of misincorporation of dUMP residues by DNA polymerase or due to deamination of cytosine.</text>
</comment>
<comment type="catalytic activity">
    <reaction evidence="1">
        <text>Hydrolyzes single-stranded DNA or mismatched double-stranded DNA and polynucleotides, releasing free uracil.</text>
        <dbReference type="EC" id="3.2.2.27"/>
    </reaction>
</comment>
<comment type="subcellular location">
    <subcellularLocation>
        <location evidence="1">Cytoplasm</location>
    </subcellularLocation>
</comment>
<comment type="similarity">
    <text evidence="1">Belongs to the uracil-DNA glycosylase (UDG) superfamily. UNG family.</text>
</comment>
<protein>
    <recommendedName>
        <fullName evidence="1">Uracil-DNA glycosylase</fullName>
        <shortName evidence="1">UDG</shortName>
        <ecNumber evidence="1">3.2.2.27</ecNumber>
    </recommendedName>
</protein>
<reference key="1">
    <citation type="journal article" date="2009" name="J. Bacteriol.">
        <title>Complete genome sequence of the extremophilic Bacillus cereus strain Q1 with industrial applications.</title>
        <authorList>
            <person name="Xiong Z."/>
            <person name="Jiang Y."/>
            <person name="Qi D."/>
            <person name="Lu H."/>
            <person name="Yang F."/>
            <person name="Yang J."/>
            <person name="Chen L."/>
            <person name="Sun L."/>
            <person name="Xu X."/>
            <person name="Xue Y."/>
            <person name="Zhu Y."/>
            <person name="Jin Q."/>
        </authorList>
    </citation>
    <scope>NUCLEOTIDE SEQUENCE [LARGE SCALE GENOMIC DNA]</scope>
    <source>
        <strain>Q1</strain>
    </source>
</reference>
<name>UNG_BACCQ</name>
<accession>B9IS32</accession>
<dbReference type="EC" id="3.2.2.27" evidence="1"/>
<dbReference type="EMBL" id="CP000227">
    <property type="protein sequence ID" value="ACM15640.1"/>
    <property type="molecule type" value="Genomic_DNA"/>
</dbReference>
<dbReference type="SMR" id="B9IS32"/>
<dbReference type="KEGG" id="bcq:BCQ_5240"/>
<dbReference type="HOGENOM" id="CLU_032162_3_0_9"/>
<dbReference type="Proteomes" id="UP000000441">
    <property type="component" value="Chromosome"/>
</dbReference>
<dbReference type="GO" id="GO:0005737">
    <property type="term" value="C:cytoplasm"/>
    <property type="evidence" value="ECO:0007669"/>
    <property type="project" value="UniProtKB-SubCell"/>
</dbReference>
<dbReference type="GO" id="GO:0004844">
    <property type="term" value="F:uracil DNA N-glycosylase activity"/>
    <property type="evidence" value="ECO:0007669"/>
    <property type="project" value="UniProtKB-UniRule"/>
</dbReference>
<dbReference type="GO" id="GO:0097510">
    <property type="term" value="P:base-excision repair, AP site formation via deaminated base removal"/>
    <property type="evidence" value="ECO:0007669"/>
    <property type="project" value="TreeGrafter"/>
</dbReference>
<dbReference type="CDD" id="cd10027">
    <property type="entry name" value="UDG-F1-like"/>
    <property type="match status" value="1"/>
</dbReference>
<dbReference type="FunFam" id="3.40.470.10:FF:000001">
    <property type="entry name" value="Uracil-DNA glycosylase"/>
    <property type="match status" value="1"/>
</dbReference>
<dbReference type="Gene3D" id="3.40.470.10">
    <property type="entry name" value="Uracil-DNA glycosylase-like domain"/>
    <property type="match status" value="1"/>
</dbReference>
<dbReference type="HAMAP" id="MF_00148">
    <property type="entry name" value="UDG"/>
    <property type="match status" value="1"/>
</dbReference>
<dbReference type="InterPro" id="IPR002043">
    <property type="entry name" value="UDG_fam1"/>
</dbReference>
<dbReference type="InterPro" id="IPR018085">
    <property type="entry name" value="Ura-DNA_Glyclase_AS"/>
</dbReference>
<dbReference type="InterPro" id="IPR005122">
    <property type="entry name" value="Uracil-DNA_glycosylase-like"/>
</dbReference>
<dbReference type="InterPro" id="IPR036895">
    <property type="entry name" value="Uracil-DNA_glycosylase-like_sf"/>
</dbReference>
<dbReference type="NCBIfam" id="NF003588">
    <property type="entry name" value="PRK05254.1-1"/>
    <property type="match status" value="1"/>
</dbReference>
<dbReference type="NCBIfam" id="NF003589">
    <property type="entry name" value="PRK05254.1-2"/>
    <property type="match status" value="1"/>
</dbReference>
<dbReference type="NCBIfam" id="NF003591">
    <property type="entry name" value="PRK05254.1-4"/>
    <property type="match status" value="1"/>
</dbReference>
<dbReference type="NCBIfam" id="NF003592">
    <property type="entry name" value="PRK05254.1-5"/>
    <property type="match status" value="1"/>
</dbReference>
<dbReference type="NCBIfam" id="TIGR00628">
    <property type="entry name" value="ung"/>
    <property type="match status" value="1"/>
</dbReference>
<dbReference type="PANTHER" id="PTHR11264">
    <property type="entry name" value="URACIL-DNA GLYCOSYLASE"/>
    <property type="match status" value="1"/>
</dbReference>
<dbReference type="PANTHER" id="PTHR11264:SF0">
    <property type="entry name" value="URACIL-DNA GLYCOSYLASE"/>
    <property type="match status" value="1"/>
</dbReference>
<dbReference type="Pfam" id="PF03167">
    <property type="entry name" value="UDG"/>
    <property type="match status" value="1"/>
</dbReference>
<dbReference type="SMART" id="SM00986">
    <property type="entry name" value="UDG"/>
    <property type="match status" value="1"/>
</dbReference>
<dbReference type="SMART" id="SM00987">
    <property type="entry name" value="UreE_C"/>
    <property type="match status" value="1"/>
</dbReference>
<dbReference type="SUPFAM" id="SSF52141">
    <property type="entry name" value="Uracil-DNA glycosylase-like"/>
    <property type="match status" value="1"/>
</dbReference>
<dbReference type="PROSITE" id="PS00130">
    <property type="entry name" value="U_DNA_GLYCOSYLASE"/>
    <property type="match status" value="1"/>
</dbReference>
<keyword id="KW-0963">Cytoplasm</keyword>
<keyword id="KW-0227">DNA damage</keyword>
<keyword id="KW-0234">DNA repair</keyword>
<keyword id="KW-0378">Hydrolase</keyword>
<gene>
    <name evidence="1" type="primary">ung</name>
    <name type="ordered locus">BCQ_5240</name>
</gene>
<organism>
    <name type="scientific">Bacillus cereus (strain Q1)</name>
    <dbReference type="NCBI Taxonomy" id="361100"/>
    <lineage>
        <taxon>Bacteria</taxon>
        <taxon>Bacillati</taxon>
        <taxon>Bacillota</taxon>
        <taxon>Bacilli</taxon>
        <taxon>Bacillales</taxon>
        <taxon>Bacillaceae</taxon>
        <taxon>Bacillus</taxon>
        <taxon>Bacillus cereus group</taxon>
    </lineage>
</organism>
<evidence type="ECO:0000255" key="1">
    <source>
        <dbReference type="HAMAP-Rule" id="MF_00148"/>
    </source>
</evidence>
<sequence length="225" mass="26023">MENVLKNDWGPLLAPEFEKEYYRKLADFLKEEYSTHVVYPKKEDIFNALEYTSYENTKVVILGQDPYHGPNQAHGLSFSVQPGIKTPPSLLNMYKELRDEYGYDIPNNGYLVKWAEQGVLLLNTVLTVRQGEANSHKGKGWEHFTDRVIELLNEREKPVIFILWGRHAQAKKKLITNTKHHIIESVHPSPLSARRGFFGSKPYSKVNTILANMGEREIDWEIPNL</sequence>